<proteinExistence type="inferred from homology"/>
<gene>
    <name evidence="1" type="primary">mtnC</name>
    <name type="ordered locus">Smlt2187</name>
</gene>
<reference key="1">
    <citation type="journal article" date="2008" name="Genome Biol.">
        <title>The complete genome, comparative and functional analysis of Stenotrophomonas maltophilia reveals an organism heavily shielded by drug resistance determinants.</title>
        <authorList>
            <person name="Crossman L.C."/>
            <person name="Gould V.C."/>
            <person name="Dow J.M."/>
            <person name="Vernikos G.S."/>
            <person name="Okazaki A."/>
            <person name="Sebaihia M."/>
            <person name="Saunders D."/>
            <person name="Arrowsmith C."/>
            <person name="Carver T."/>
            <person name="Peters N."/>
            <person name="Adlem E."/>
            <person name="Kerhornou A."/>
            <person name="Lord A."/>
            <person name="Murphy L."/>
            <person name="Seeger K."/>
            <person name="Squares R."/>
            <person name="Rutter S."/>
            <person name="Quail M.A."/>
            <person name="Rajandream M.A."/>
            <person name="Harris D."/>
            <person name="Churcher C."/>
            <person name="Bentley S.D."/>
            <person name="Parkhill J."/>
            <person name="Thomson N.R."/>
            <person name="Avison M.B."/>
        </authorList>
    </citation>
    <scope>NUCLEOTIDE SEQUENCE [LARGE SCALE GENOMIC DNA]</scope>
    <source>
        <strain>K279a</strain>
    </source>
</reference>
<feature type="chain" id="PRO_0000357414" description="Enolase-phosphatase E1">
    <location>
        <begin position="1"/>
        <end position="231"/>
    </location>
</feature>
<name>MTNC_STRMK</name>
<evidence type="ECO:0000255" key="1">
    <source>
        <dbReference type="HAMAP-Rule" id="MF_01681"/>
    </source>
</evidence>
<organism>
    <name type="scientific">Stenotrophomonas maltophilia (strain K279a)</name>
    <dbReference type="NCBI Taxonomy" id="522373"/>
    <lineage>
        <taxon>Bacteria</taxon>
        <taxon>Pseudomonadati</taxon>
        <taxon>Pseudomonadota</taxon>
        <taxon>Gammaproteobacteria</taxon>
        <taxon>Lysobacterales</taxon>
        <taxon>Lysobacteraceae</taxon>
        <taxon>Stenotrophomonas</taxon>
        <taxon>Stenotrophomonas maltophilia group</taxon>
    </lineage>
</organism>
<accession>B2FPP2</accession>
<dbReference type="EC" id="3.1.3.77" evidence="1"/>
<dbReference type="EMBL" id="AM743169">
    <property type="protein sequence ID" value="CAQ45685.1"/>
    <property type="molecule type" value="Genomic_DNA"/>
</dbReference>
<dbReference type="RefSeq" id="WP_012480050.1">
    <property type="nucleotide sequence ID" value="NC_010943.1"/>
</dbReference>
<dbReference type="SMR" id="B2FPP2"/>
<dbReference type="EnsemblBacteria" id="CAQ45685">
    <property type="protein sequence ID" value="CAQ45685"/>
    <property type="gene ID" value="Smlt2187"/>
</dbReference>
<dbReference type="KEGG" id="sml:Smlt2187"/>
<dbReference type="PATRIC" id="fig|522373.3.peg.2079"/>
<dbReference type="eggNOG" id="COG4229">
    <property type="taxonomic scope" value="Bacteria"/>
</dbReference>
<dbReference type="HOGENOM" id="CLU_023273_0_0_6"/>
<dbReference type="UniPathway" id="UPA00904">
    <property type="reaction ID" value="UER00876"/>
</dbReference>
<dbReference type="UniPathway" id="UPA00904">
    <property type="reaction ID" value="UER00877"/>
</dbReference>
<dbReference type="Proteomes" id="UP000008840">
    <property type="component" value="Chromosome"/>
</dbReference>
<dbReference type="GO" id="GO:0043715">
    <property type="term" value="F:2,3-diketo-5-methylthiopentyl-1-phosphate enolase activity"/>
    <property type="evidence" value="ECO:0007669"/>
    <property type="project" value="UniProtKB-UniRule"/>
</dbReference>
<dbReference type="GO" id="GO:0043716">
    <property type="term" value="F:2-hydroxy-3-keto-5-methylthiopentenyl-1-phosphate phosphatase activity"/>
    <property type="evidence" value="ECO:0007669"/>
    <property type="project" value="UniProtKB-UniRule"/>
</dbReference>
<dbReference type="GO" id="GO:0043874">
    <property type="term" value="F:acireductone synthase activity"/>
    <property type="evidence" value="ECO:0007669"/>
    <property type="project" value="UniProtKB-EC"/>
</dbReference>
<dbReference type="GO" id="GO:0000287">
    <property type="term" value="F:magnesium ion binding"/>
    <property type="evidence" value="ECO:0007669"/>
    <property type="project" value="UniProtKB-UniRule"/>
</dbReference>
<dbReference type="GO" id="GO:0019509">
    <property type="term" value="P:L-methionine salvage from methylthioadenosine"/>
    <property type="evidence" value="ECO:0007669"/>
    <property type="project" value="UniProtKB-UniRule"/>
</dbReference>
<dbReference type="CDD" id="cd01629">
    <property type="entry name" value="HAD_EP"/>
    <property type="match status" value="1"/>
</dbReference>
<dbReference type="Gene3D" id="1.10.720.60">
    <property type="match status" value="1"/>
</dbReference>
<dbReference type="Gene3D" id="3.40.50.1000">
    <property type="entry name" value="HAD superfamily/HAD-like"/>
    <property type="match status" value="1"/>
</dbReference>
<dbReference type="HAMAP" id="MF_01681">
    <property type="entry name" value="Salvage_MtnC"/>
    <property type="match status" value="1"/>
</dbReference>
<dbReference type="InterPro" id="IPR023943">
    <property type="entry name" value="Enolase-ppase_E1"/>
</dbReference>
<dbReference type="InterPro" id="IPR036412">
    <property type="entry name" value="HAD-like_sf"/>
</dbReference>
<dbReference type="InterPro" id="IPR006439">
    <property type="entry name" value="HAD-SF_hydro_IA"/>
</dbReference>
<dbReference type="InterPro" id="IPR023214">
    <property type="entry name" value="HAD_sf"/>
</dbReference>
<dbReference type="NCBIfam" id="TIGR01691">
    <property type="entry name" value="enolase-ppase"/>
    <property type="match status" value="1"/>
</dbReference>
<dbReference type="NCBIfam" id="TIGR01549">
    <property type="entry name" value="HAD-SF-IA-v1"/>
    <property type="match status" value="1"/>
</dbReference>
<dbReference type="PANTHER" id="PTHR20371">
    <property type="entry name" value="ENOLASE-PHOSPHATASE E1"/>
    <property type="match status" value="1"/>
</dbReference>
<dbReference type="PANTHER" id="PTHR20371:SF1">
    <property type="entry name" value="ENOLASE-PHOSPHATASE E1"/>
    <property type="match status" value="1"/>
</dbReference>
<dbReference type="Pfam" id="PF00702">
    <property type="entry name" value="Hydrolase"/>
    <property type="match status" value="1"/>
</dbReference>
<dbReference type="SFLD" id="SFLDF00044">
    <property type="entry name" value="enolase-phosphatase"/>
    <property type="match status" value="1"/>
</dbReference>
<dbReference type="SFLD" id="SFLDS00003">
    <property type="entry name" value="Haloacid_Dehalogenase"/>
    <property type="match status" value="1"/>
</dbReference>
<dbReference type="SUPFAM" id="SSF56784">
    <property type="entry name" value="HAD-like"/>
    <property type="match status" value="1"/>
</dbReference>
<protein>
    <recommendedName>
        <fullName evidence="1">Enolase-phosphatase E1</fullName>
        <ecNumber evidence="1">3.1.3.77</ecNumber>
    </recommendedName>
    <alternativeName>
        <fullName evidence="1">2,3-diketo-5-methylthio-1-phosphopentane phosphatase</fullName>
    </alternativeName>
</protein>
<keyword id="KW-0028">Amino-acid biosynthesis</keyword>
<keyword id="KW-0378">Hydrolase</keyword>
<keyword id="KW-0460">Magnesium</keyword>
<keyword id="KW-0479">Metal-binding</keyword>
<keyword id="KW-0486">Methionine biosynthesis</keyword>
<keyword id="KW-1185">Reference proteome</keyword>
<sequence length="231" mass="25588">MQPRVILTDIEGTTSSISFVKNVLFPYARKALPAFVAEHGQQPEVRRWLDAVATEIGGACQDSLVAETLQGWIDQDRKHTALKALQGLIWDEGYRRGDYTAHFYPEVAPVLKGWHAAGLPLYVYSSGSVPAQKLFFGFSDAGDLSPLVSGWFDTEIGGKREADSYRRIVQAIGVPAGEIVFLSDVVEELDAAREAGLQTRLIDRLDDYPMPRIGQAANGHERVENFQQIQL</sequence>
<comment type="function">
    <text evidence="1">Bifunctional enzyme that catalyzes the enolization of 2,3-diketo-5-methylthiopentyl-1-phosphate (DK-MTP-1-P) into the intermediate 2-hydroxy-3-keto-5-methylthiopentenyl-1-phosphate (HK-MTPenyl-1-P), which is then dephosphorylated to form the acireductone 1,2-dihydroxy-3-keto-5-methylthiopentene (DHK-MTPene).</text>
</comment>
<comment type="catalytic activity">
    <reaction evidence="1">
        <text>5-methylsulfanyl-2,3-dioxopentyl phosphate + H2O = 1,2-dihydroxy-5-(methylsulfanyl)pent-1-en-3-one + phosphate</text>
        <dbReference type="Rhea" id="RHEA:21700"/>
        <dbReference type="ChEBI" id="CHEBI:15377"/>
        <dbReference type="ChEBI" id="CHEBI:43474"/>
        <dbReference type="ChEBI" id="CHEBI:49252"/>
        <dbReference type="ChEBI" id="CHEBI:58828"/>
        <dbReference type="EC" id="3.1.3.77"/>
    </reaction>
</comment>
<comment type="cofactor">
    <cofactor evidence="1">
        <name>Mg(2+)</name>
        <dbReference type="ChEBI" id="CHEBI:18420"/>
    </cofactor>
    <text evidence="1">Binds 1 Mg(2+) ion per subunit.</text>
</comment>
<comment type="pathway">
    <text evidence="1">Amino-acid biosynthesis; L-methionine biosynthesis via salvage pathway; L-methionine from S-methyl-5-thio-alpha-D-ribose 1-phosphate: step 3/6.</text>
</comment>
<comment type="pathway">
    <text evidence="1">Amino-acid biosynthesis; L-methionine biosynthesis via salvage pathway; L-methionine from S-methyl-5-thio-alpha-D-ribose 1-phosphate: step 4/6.</text>
</comment>
<comment type="subunit">
    <text evidence="1">Monomer.</text>
</comment>
<comment type="similarity">
    <text evidence="1">Belongs to the HAD-like hydrolase superfamily. MasA/MtnC family.</text>
</comment>